<proteinExistence type="inferred from homology"/>
<sequence>MKKLTILGSTGSIGTSTLEIVAAHPDRFQVIALTAGSNLELLKQQVEVFRPRLVSVLTADLARQLDRMLSDPKPEIHHGIPGLIAAATAGEADVVVAAIVGAAGLVPTAAAIKAGKDVALANKETLVTAGRIMMDLVRENGVRLYPVDSEHSAVFQSLEGQSGKDVKRIILTASGGPFLNLPLDRLSRVSVADALNHPNWSMGQKITIDSATMMNKGLEVIEARWLFDTPAERIAVNIHPQSIIHSMVEYVDGCVMAQLGVPDMKAPIAYALTYPERIPTGVKPLDLTALSGLTFLAPDYQRFPALKLAYDALAAGESMPAVMNAANEVAVEAFLKGKIGFTGIATSIARTMDAHEPHTLATIEDVLSSDLWAREKSRELIGLS</sequence>
<evidence type="ECO:0000255" key="1">
    <source>
        <dbReference type="HAMAP-Rule" id="MF_00183"/>
    </source>
</evidence>
<comment type="function">
    <text evidence="1">Catalyzes the NADPH-dependent rearrangement and reduction of 1-deoxy-D-xylulose-5-phosphate (DXP) to 2-C-methyl-D-erythritol 4-phosphate (MEP).</text>
</comment>
<comment type="catalytic activity">
    <reaction evidence="1">
        <text>2-C-methyl-D-erythritol 4-phosphate + NADP(+) = 1-deoxy-D-xylulose 5-phosphate + NADPH + H(+)</text>
        <dbReference type="Rhea" id="RHEA:13717"/>
        <dbReference type="ChEBI" id="CHEBI:15378"/>
        <dbReference type="ChEBI" id="CHEBI:57783"/>
        <dbReference type="ChEBI" id="CHEBI:57792"/>
        <dbReference type="ChEBI" id="CHEBI:58262"/>
        <dbReference type="ChEBI" id="CHEBI:58349"/>
        <dbReference type="EC" id="1.1.1.267"/>
    </reaction>
    <physiologicalReaction direction="right-to-left" evidence="1">
        <dbReference type="Rhea" id="RHEA:13719"/>
    </physiologicalReaction>
</comment>
<comment type="cofactor">
    <cofactor evidence="1">
        <name>Mg(2+)</name>
        <dbReference type="ChEBI" id="CHEBI:18420"/>
    </cofactor>
    <cofactor evidence="1">
        <name>Mn(2+)</name>
        <dbReference type="ChEBI" id="CHEBI:29035"/>
    </cofactor>
</comment>
<comment type="pathway">
    <text evidence="1">Isoprenoid biosynthesis; isopentenyl diphosphate biosynthesis via DXP pathway; isopentenyl diphosphate from 1-deoxy-D-xylulose 5-phosphate: step 1/6.</text>
</comment>
<comment type="similarity">
    <text evidence="1">Belongs to the DXR family.</text>
</comment>
<dbReference type="EC" id="1.1.1.267" evidence="1"/>
<dbReference type="EMBL" id="CP000148">
    <property type="protein sequence ID" value="ABB31492.1"/>
    <property type="molecule type" value="Genomic_DNA"/>
</dbReference>
<dbReference type="RefSeq" id="WP_004512111.1">
    <property type="nucleotide sequence ID" value="NC_007517.1"/>
</dbReference>
<dbReference type="SMR" id="Q39W82"/>
<dbReference type="STRING" id="269799.Gmet_1256"/>
<dbReference type="KEGG" id="gme:Gmet_1256"/>
<dbReference type="eggNOG" id="COG0743">
    <property type="taxonomic scope" value="Bacteria"/>
</dbReference>
<dbReference type="HOGENOM" id="CLU_035714_4_0_7"/>
<dbReference type="UniPathway" id="UPA00056">
    <property type="reaction ID" value="UER00092"/>
</dbReference>
<dbReference type="Proteomes" id="UP000007073">
    <property type="component" value="Chromosome"/>
</dbReference>
<dbReference type="GO" id="GO:0030604">
    <property type="term" value="F:1-deoxy-D-xylulose-5-phosphate reductoisomerase activity"/>
    <property type="evidence" value="ECO:0007669"/>
    <property type="project" value="UniProtKB-UniRule"/>
</dbReference>
<dbReference type="GO" id="GO:0030145">
    <property type="term" value="F:manganese ion binding"/>
    <property type="evidence" value="ECO:0007669"/>
    <property type="project" value="TreeGrafter"/>
</dbReference>
<dbReference type="GO" id="GO:0070402">
    <property type="term" value="F:NADPH binding"/>
    <property type="evidence" value="ECO:0007669"/>
    <property type="project" value="InterPro"/>
</dbReference>
<dbReference type="GO" id="GO:0051484">
    <property type="term" value="P:isopentenyl diphosphate biosynthetic process, methylerythritol 4-phosphate pathway involved in terpenoid biosynthetic process"/>
    <property type="evidence" value="ECO:0007669"/>
    <property type="project" value="TreeGrafter"/>
</dbReference>
<dbReference type="FunFam" id="1.10.1740.10:FF:000004">
    <property type="entry name" value="1-deoxy-D-xylulose 5-phosphate reductoisomerase"/>
    <property type="match status" value="1"/>
</dbReference>
<dbReference type="FunFam" id="3.40.50.720:FF:000045">
    <property type="entry name" value="1-deoxy-D-xylulose 5-phosphate reductoisomerase"/>
    <property type="match status" value="1"/>
</dbReference>
<dbReference type="Gene3D" id="1.10.1740.10">
    <property type="match status" value="1"/>
</dbReference>
<dbReference type="Gene3D" id="3.40.50.720">
    <property type="entry name" value="NAD(P)-binding Rossmann-like Domain"/>
    <property type="match status" value="1"/>
</dbReference>
<dbReference type="HAMAP" id="MF_00183">
    <property type="entry name" value="DXP_reductoisom"/>
    <property type="match status" value="1"/>
</dbReference>
<dbReference type="InterPro" id="IPR003821">
    <property type="entry name" value="DXP_reductoisomerase"/>
</dbReference>
<dbReference type="InterPro" id="IPR013644">
    <property type="entry name" value="DXP_reductoisomerase_C"/>
</dbReference>
<dbReference type="InterPro" id="IPR013512">
    <property type="entry name" value="DXP_reductoisomerase_N"/>
</dbReference>
<dbReference type="InterPro" id="IPR026877">
    <property type="entry name" value="DXPR_C"/>
</dbReference>
<dbReference type="InterPro" id="IPR036169">
    <property type="entry name" value="DXPR_C_sf"/>
</dbReference>
<dbReference type="InterPro" id="IPR036291">
    <property type="entry name" value="NAD(P)-bd_dom_sf"/>
</dbReference>
<dbReference type="NCBIfam" id="TIGR00243">
    <property type="entry name" value="Dxr"/>
    <property type="match status" value="1"/>
</dbReference>
<dbReference type="NCBIfam" id="NF009114">
    <property type="entry name" value="PRK12464.1"/>
    <property type="match status" value="1"/>
</dbReference>
<dbReference type="PANTHER" id="PTHR30525">
    <property type="entry name" value="1-DEOXY-D-XYLULOSE 5-PHOSPHATE REDUCTOISOMERASE"/>
    <property type="match status" value="1"/>
</dbReference>
<dbReference type="PANTHER" id="PTHR30525:SF0">
    <property type="entry name" value="1-DEOXY-D-XYLULOSE 5-PHOSPHATE REDUCTOISOMERASE, CHLOROPLASTIC"/>
    <property type="match status" value="1"/>
</dbReference>
<dbReference type="Pfam" id="PF08436">
    <property type="entry name" value="DXP_redisom_C"/>
    <property type="match status" value="1"/>
</dbReference>
<dbReference type="Pfam" id="PF02670">
    <property type="entry name" value="DXP_reductoisom"/>
    <property type="match status" value="1"/>
</dbReference>
<dbReference type="Pfam" id="PF13288">
    <property type="entry name" value="DXPR_C"/>
    <property type="match status" value="1"/>
</dbReference>
<dbReference type="PIRSF" id="PIRSF006205">
    <property type="entry name" value="Dxp_reductismrs"/>
    <property type="match status" value="1"/>
</dbReference>
<dbReference type="SUPFAM" id="SSF69055">
    <property type="entry name" value="1-deoxy-D-xylulose-5-phosphate reductoisomerase, C-terminal domain"/>
    <property type="match status" value="1"/>
</dbReference>
<dbReference type="SUPFAM" id="SSF55347">
    <property type="entry name" value="Glyceraldehyde-3-phosphate dehydrogenase-like, C-terminal domain"/>
    <property type="match status" value="1"/>
</dbReference>
<dbReference type="SUPFAM" id="SSF51735">
    <property type="entry name" value="NAD(P)-binding Rossmann-fold domains"/>
    <property type="match status" value="1"/>
</dbReference>
<protein>
    <recommendedName>
        <fullName evidence="1">1-deoxy-D-xylulose 5-phosphate reductoisomerase</fullName>
        <shortName evidence="1">DXP reductoisomerase</shortName>
        <ecNumber evidence="1">1.1.1.267</ecNumber>
    </recommendedName>
    <alternativeName>
        <fullName evidence="1">1-deoxyxylulose-5-phosphate reductoisomerase</fullName>
    </alternativeName>
    <alternativeName>
        <fullName evidence="1">2-C-methyl-D-erythritol 4-phosphate synthase</fullName>
    </alternativeName>
</protein>
<accession>Q39W82</accession>
<name>DXR_GEOMG</name>
<reference key="1">
    <citation type="journal article" date="2009" name="BMC Microbiol.">
        <title>The genome sequence of Geobacter metallireducens: features of metabolism, physiology and regulation common and dissimilar to Geobacter sulfurreducens.</title>
        <authorList>
            <person name="Aklujkar M."/>
            <person name="Krushkal J."/>
            <person name="DiBartolo G."/>
            <person name="Lapidus A."/>
            <person name="Land M.L."/>
            <person name="Lovley D.R."/>
        </authorList>
    </citation>
    <scope>NUCLEOTIDE SEQUENCE [LARGE SCALE GENOMIC DNA]</scope>
    <source>
        <strain>ATCC 53774 / DSM 7210 / GS-15</strain>
    </source>
</reference>
<gene>
    <name evidence="1" type="primary">dxr</name>
    <name type="ordered locus">Gmet_1256</name>
</gene>
<organism>
    <name type="scientific">Geobacter metallireducens (strain ATCC 53774 / DSM 7210 / GS-15)</name>
    <dbReference type="NCBI Taxonomy" id="269799"/>
    <lineage>
        <taxon>Bacteria</taxon>
        <taxon>Pseudomonadati</taxon>
        <taxon>Thermodesulfobacteriota</taxon>
        <taxon>Desulfuromonadia</taxon>
        <taxon>Geobacterales</taxon>
        <taxon>Geobacteraceae</taxon>
        <taxon>Geobacter</taxon>
    </lineage>
</organism>
<keyword id="KW-0414">Isoprene biosynthesis</keyword>
<keyword id="KW-0464">Manganese</keyword>
<keyword id="KW-0479">Metal-binding</keyword>
<keyword id="KW-0521">NADP</keyword>
<keyword id="KW-0560">Oxidoreductase</keyword>
<keyword id="KW-1185">Reference proteome</keyword>
<feature type="chain" id="PRO_1000020266" description="1-deoxy-D-xylulose 5-phosphate reductoisomerase">
    <location>
        <begin position="1"/>
        <end position="384"/>
    </location>
</feature>
<feature type="binding site" evidence="1">
    <location>
        <position position="10"/>
    </location>
    <ligand>
        <name>NADPH</name>
        <dbReference type="ChEBI" id="CHEBI:57783"/>
    </ligand>
</feature>
<feature type="binding site" evidence="1">
    <location>
        <position position="11"/>
    </location>
    <ligand>
        <name>NADPH</name>
        <dbReference type="ChEBI" id="CHEBI:57783"/>
    </ligand>
</feature>
<feature type="binding site" evidence="1">
    <location>
        <position position="12"/>
    </location>
    <ligand>
        <name>NADPH</name>
        <dbReference type="ChEBI" id="CHEBI:57783"/>
    </ligand>
</feature>
<feature type="binding site" evidence="1">
    <location>
        <position position="13"/>
    </location>
    <ligand>
        <name>NADPH</name>
        <dbReference type="ChEBI" id="CHEBI:57783"/>
    </ligand>
</feature>
<feature type="binding site" evidence="1">
    <location>
        <position position="36"/>
    </location>
    <ligand>
        <name>NADPH</name>
        <dbReference type="ChEBI" id="CHEBI:57783"/>
    </ligand>
</feature>
<feature type="binding site" evidence="1">
    <location>
        <position position="38"/>
    </location>
    <ligand>
        <name>NADPH</name>
        <dbReference type="ChEBI" id="CHEBI:57783"/>
    </ligand>
</feature>
<feature type="binding site" evidence="1">
    <location>
        <position position="122"/>
    </location>
    <ligand>
        <name>NADPH</name>
        <dbReference type="ChEBI" id="CHEBI:57783"/>
    </ligand>
</feature>
<feature type="binding site" evidence="1">
    <location>
        <position position="123"/>
    </location>
    <ligand>
        <name>1-deoxy-D-xylulose 5-phosphate</name>
        <dbReference type="ChEBI" id="CHEBI:57792"/>
    </ligand>
</feature>
<feature type="binding site" evidence="1">
    <location>
        <position position="124"/>
    </location>
    <ligand>
        <name>NADPH</name>
        <dbReference type="ChEBI" id="CHEBI:57783"/>
    </ligand>
</feature>
<feature type="binding site" evidence="1">
    <location>
        <position position="148"/>
    </location>
    <ligand>
        <name>Mn(2+)</name>
        <dbReference type="ChEBI" id="CHEBI:29035"/>
    </ligand>
</feature>
<feature type="binding site" evidence="1">
    <location>
        <position position="149"/>
    </location>
    <ligand>
        <name>1-deoxy-D-xylulose 5-phosphate</name>
        <dbReference type="ChEBI" id="CHEBI:57792"/>
    </ligand>
</feature>
<feature type="binding site" evidence="1">
    <location>
        <position position="150"/>
    </location>
    <ligand>
        <name>1-deoxy-D-xylulose 5-phosphate</name>
        <dbReference type="ChEBI" id="CHEBI:57792"/>
    </ligand>
</feature>
<feature type="binding site" evidence="1">
    <location>
        <position position="150"/>
    </location>
    <ligand>
        <name>Mn(2+)</name>
        <dbReference type="ChEBI" id="CHEBI:29035"/>
    </ligand>
</feature>
<feature type="binding site" evidence="1">
    <location>
        <position position="174"/>
    </location>
    <ligand>
        <name>1-deoxy-D-xylulose 5-phosphate</name>
        <dbReference type="ChEBI" id="CHEBI:57792"/>
    </ligand>
</feature>
<feature type="binding site" evidence="1">
    <location>
        <position position="197"/>
    </location>
    <ligand>
        <name>1-deoxy-D-xylulose 5-phosphate</name>
        <dbReference type="ChEBI" id="CHEBI:57792"/>
    </ligand>
</feature>
<feature type="binding site" evidence="1">
    <location>
        <position position="203"/>
    </location>
    <ligand>
        <name>NADPH</name>
        <dbReference type="ChEBI" id="CHEBI:57783"/>
    </ligand>
</feature>
<feature type="binding site" evidence="1">
    <location>
        <position position="210"/>
    </location>
    <ligand>
        <name>1-deoxy-D-xylulose 5-phosphate</name>
        <dbReference type="ChEBI" id="CHEBI:57792"/>
    </ligand>
</feature>
<feature type="binding site" evidence="1">
    <location>
        <position position="215"/>
    </location>
    <ligand>
        <name>1-deoxy-D-xylulose 5-phosphate</name>
        <dbReference type="ChEBI" id="CHEBI:57792"/>
    </ligand>
</feature>
<feature type="binding site" evidence="1">
    <location>
        <position position="216"/>
    </location>
    <ligand>
        <name>1-deoxy-D-xylulose 5-phosphate</name>
        <dbReference type="ChEBI" id="CHEBI:57792"/>
    </ligand>
</feature>
<feature type="binding site" evidence="1">
    <location>
        <position position="219"/>
    </location>
    <ligand>
        <name>1-deoxy-D-xylulose 5-phosphate</name>
        <dbReference type="ChEBI" id="CHEBI:57792"/>
    </ligand>
</feature>
<feature type="binding site" evidence="1">
    <location>
        <position position="219"/>
    </location>
    <ligand>
        <name>Mn(2+)</name>
        <dbReference type="ChEBI" id="CHEBI:29035"/>
    </ligand>
</feature>